<proteinExistence type="inferred from homology"/>
<reference key="1">
    <citation type="journal article" date="2005" name="Nucleic Acids Res.">
        <title>The genome sequence of Salmonella enterica serovar Choleraesuis, a highly invasive and resistant zoonotic pathogen.</title>
        <authorList>
            <person name="Chiu C.-H."/>
            <person name="Tang P."/>
            <person name="Chu C."/>
            <person name="Hu S."/>
            <person name="Bao Q."/>
            <person name="Yu J."/>
            <person name="Chou Y.-Y."/>
            <person name="Wang H.-S."/>
            <person name="Lee Y.-S."/>
        </authorList>
    </citation>
    <scope>NUCLEOTIDE SEQUENCE [LARGE SCALE GENOMIC DNA]</scope>
    <source>
        <strain>SC-B67</strain>
    </source>
</reference>
<organism>
    <name type="scientific">Salmonella choleraesuis (strain SC-B67)</name>
    <dbReference type="NCBI Taxonomy" id="321314"/>
    <lineage>
        <taxon>Bacteria</taxon>
        <taxon>Pseudomonadati</taxon>
        <taxon>Pseudomonadota</taxon>
        <taxon>Gammaproteobacteria</taxon>
        <taxon>Enterobacterales</taxon>
        <taxon>Enterobacteriaceae</taxon>
        <taxon>Salmonella</taxon>
    </lineage>
</organism>
<sequence length="241" mass="26787">MATVSMRDMLKAGVHFGHQTRYWNPKMKPFIFGARNKVHIINLEKTVPMFNEALAELNKISARKGKILFVGTKRAASEAVREAANSCDQFFVNHRWLGGMLTNWKTVRQSIKRLKDLETQSQDGTFEKLTKKEALMRTRELEKLENSLGGIKDMGGLPDALFVIDADHEHIAIKEANNLGIPVFAIVDTNSDPDGVDFVIPGNDDAIRAVSLYLGAVAATVREGRSQDLASQAEESFVEAE</sequence>
<protein>
    <recommendedName>
        <fullName evidence="1">Small ribosomal subunit protein uS2</fullName>
    </recommendedName>
    <alternativeName>
        <fullName evidence="2">30S ribosomal protein S2</fullName>
    </alternativeName>
</protein>
<name>RS2_SALCH</name>
<gene>
    <name evidence="1" type="primary">rpsB</name>
    <name type="ordered locus">SCH_0216</name>
</gene>
<keyword id="KW-0687">Ribonucleoprotein</keyword>
<keyword id="KW-0689">Ribosomal protein</keyword>
<evidence type="ECO:0000255" key="1">
    <source>
        <dbReference type="HAMAP-Rule" id="MF_00291"/>
    </source>
</evidence>
<evidence type="ECO:0000305" key="2"/>
<feature type="chain" id="PRO_1000004060" description="Small ribosomal subunit protein uS2">
    <location>
        <begin position="1"/>
        <end position="241"/>
    </location>
</feature>
<comment type="similarity">
    <text evidence="1">Belongs to the universal ribosomal protein uS2 family.</text>
</comment>
<accession>Q57T39</accession>
<dbReference type="EMBL" id="AE017220">
    <property type="protein sequence ID" value="AAX64122.1"/>
    <property type="molecule type" value="Genomic_DNA"/>
</dbReference>
<dbReference type="RefSeq" id="WP_001539052.1">
    <property type="nucleotide sequence ID" value="NC_006905.1"/>
</dbReference>
<dbReference type="SMR" id="Q57T39"/>
<dbReference type="KEGG" id="sec:SCH_0216"/>
<dbReference type="HOGENOM" id="CLU_040318_1_0_6"/>
<dbReference type="Proteomes" id="UP000000538">
    <property type="component" value="Chromosome"/>
</dbReference>
<dbReference type="GO" id="GO:0022627">
    <property type="term" value="C:cytosolic small ribosomal subunit"/>
    <property type="evidence" value="ECO:0007669"/>
    <property type="project" value="TreeGrafter"/>
</dbReference>
<dbReference type="GO" id="GO:0003735">
    <property type="term" value="F:structural constituent of ribosome"/>
    <property type="evidence" value="ECO:0007669"/>
    <property type="project" value="InterPro"/>
</dbReference>
<dbReference type="GO" id="GO:0006412">
    <property type="term" value="P:translation"/>
    <property type="evidence" value="ECO:0007669"/>
    <property type="project" value="UniProtKB-UniRule"/>
</dbReference>
<dbReference type="CDD" id="cd01425">
    <property type="entry name" value="RPS2"/>
    <property type="match status" value="1"/>
</dbReference>
<dbReference type="FunFam" id="1.10.287.610:FF:000001">
    <property type="entry name" value="30S ribosomal protein S2"/>
    <property type="match status" value="1"/>
</dbReference>
<dbReference type="Gene3D" id="3.40.50.10490">
    <property type="entry name" value="Glucose-6-phosphate isomerase like protein, domain 1"/>
    <property type="match status" value="1"/>
</dbReference>
<dbReference type="Gene3D" id="1.10.287.610">
    <property type="entry name" value="Helix hairpin bin"/>
    <property type="match status" value="1"/>
</dbReference>
<dbReference type="HAMAP" id="MF_00291_B">
    <property type="entry name" value="Ribosomal_uS2_B"/>
    <property type="match status" value="1"/>
</dbReference>
<dbReference type="InterPro" id="IPR001865">
    <property type="entry name" value="Ribosomal_uS2"/>
</dbReference>
<dbReference type="InterPro" id="IPR005706">
    <property type="entry name" value="Ribosomal_uS2_bac/mit/plastid"/>
</dbReference>
<dbReference type="InterPro" id="IPR018130">
    <property type="entry name" value="Ribosomal_uS2_CS"/>
</dbReference>
<dbReference type="InterPro" id="IPR023591">
    <property type="entry name" value="Ribosomal_uS2_flav_dom_sf"/>
</dbReference>
<dbReference type="NCBIfam" id="TIGR01011">
    <property type="entry name" value="rpsB_bact"/>
    <property type="match status" value="1"/>
</dbReference>
<dbReference type="PANTHER" id="PTHR12534">
    <property type="entry name" value="30S RIBOSOMAL PROTEIN S2 PROKARYOTIC AND ORGANELLAR"/>
    <property type="match status" value="1"/>
</dbReference>
<dbReference type="PANTHER" id="PTHR12534:SF0">
    <property type="entry name" value="SMALL RIBOSOMAL SUBUNIT PROTEIN US2M"/>
    <property type="match status" value="1"/>
</dbReference>
<dbReference type="Pfam" id="PF00318">
    <property type="entry name" value="Ribosomal_S2"/>
    <property type="match status" value="1"/>
</dbReference>
<dbReference type="PRINTS" id="PR00395">
    <property type="entry name" value="RIBOSOMALS2"/>
</dbReference>
<dbReference type="SUPFAM" id="SSF52313">
    <property type="entry name" value="Ribosomal protein S2"/>
    <property type="match status" value="1"/>
</dbReference>
<dbReference type="PROSITE" id="PS00962">
    <property type="entry name" value="RIBOSOMAL_S2_1"/>
    <property type="match status" value="1"/>
</dbReference>
<dbReference type="PROSITE" id="PS00963">
    <property type="entry name" value="RIBOSOMAL_S2_2"/>
    <property type="match status" value="1"/>
</dbReference>